<sequence length="159" mass="16838">MNKKIFTLFLVVAASAIFAVSCNNKTTNPTSNSSEKKIVTEEDFKNAIEGLTYKTWAFTGKGKSFNFGSPITVEATSGSDSLAGVEKGFGNALKSALAAKGIDTGNITFDKGGASSSDKTSVSFKFTPKALGTSNFEEKLKSSVKEVEIKLTPKENWGA</sequence>
<organism>
    <name type="scientific">Brachyspira hyodysenteriae</name>
    <name type="common">Treponema hyodysenteriae</name>
    <dbReference type="NCBI Taxonomy" id="159"/>
    <lineage>
        <taxon>Bacteria</taxon>
        <taxon>Pseudomonadati</taxon>
        <taxon>Spirochaetota</taxon>
        <taxon>Spirochaetia</taxon>
        <taxon>Brachyspirales</taxon>
        <taxon>Brachyspiraceae</taxon>
        <taxon>Brachyspira</taxon>
    </lineage>
</organism>
<keyword id="KW-0998">Cell outer membrane</keyword>
<keyword id="KW-0449">Lipoprotein</keyword>
<keyword id="KW-0472">Membrane</keyword>
<keyword id="KW-0564">Palmitate</keyword>
<keyword id="KW-0677">Repeat</keyword>
<keyword id="KW-0732">Signal</keyword>
<gene>
    <name type="primary">smpA</name>
</gene>
<reference key="1">
    <citation type="journal article" date="1993" name="Infect. Immun.">
        <title>Molecular cloning, expression, and DNA sequence analysis of the gene that encodes the 16-kilodalton outer membrane lipoprotein of Serpulina hyodysenteriae.</title>
        <authorList>
            <person name="Thomas W."/>
            <person name="Sellwood R."/>
        </authorList>
    </citation>
    <scope>NUCLEOTIDE SEQUENCE [GENOMIC DNA]</scope>
    <source>
        <strain>P18A</strain>
    </source>
</reference>
<protein>
    <recommendedName>
        <fullName>16 kDa outer membrane lipoprotein</fullName>
    </recommendedName>
</protein>
<evidence type="ECO:0000305" key="1"/>
<accession>Q54313</accession>
<proteinExistence type="predicted"/>
<feature type="signal peptide" evidence="1">
    <location>
        <begin position="1"/>
        <end position="21"/>
    </location>
</feature>
<feature type="chain" id="PRO_0000018166" description="16 kDa outer membrane lipoprotein">
    <location>
        <begin position="22"/>
        <end position="159"/>
    </location>
</feature>
<feature type="lipid moiety-binding region" description="N-palmitoyl cysteine" evidence="1">
    <location>
        <position position="22"/>
    </location>
</feature>
<feature type="lipid moiety-binding region" description="S-diacylglycerol cysteine" evidence="1">
    <location>
        <position position="22"/>
    </location>
</feature>
<comment type="subcellular location">
    <subcellularLocation>
        <location>Cell outer membrane</location>
        <topology>Lipid-anchor</topology>
    </subcellularLocation>
</comment>
<name>SMPA_BRAHO</name>
<dbReference type="EMBL" id="X68401">
    <property type="protein sequence ID" value="CAA48467.1"/>
    <property type="molecule type" value="Genomic_DNA"/>
</dbReference>
<dbReference type="PIR" id="S33585">
    <property type="entry name" value="S33585"/>
</dbReference>
<dbReference type="RefSeq" id="WP_020063979.1">
    <property type="nucleotide sequence ID" value="NZ_MKXF01000049.1"/>
</dbReference>
<dbReference type="GeneID" id="63962174"/>
<dbReference type="PATRIC" id="fig|159.53.peg.1278"/>
<dbReference type="GO" id="GO:0009279">
    <property type="term" value="C:cell outer membrane"/>
    <property type="evidence" value="ECO:0007669"/>
    <property type="project" value="UniProtKB-SubCell"/>
</dbReference>
<dbReference type="PROSITE" id="PS51257">
    <property type="entry name" value="PROKAR_LIPOPROTEIN"/>
    <property type="match status" value="1"/>
</dbReference>